<sequence length="555" mass="59712">MPYIITQSCCNDGSCVFACPVNCIHPTPDEPGFATSEMLYIDPVACVDCGACVSACPVGAIASDTRLAPKQLPFIEINASYYPARPIDLKLPPTSKLAPVIPAAQVHVRRRPLTVAIVGSGPAAMYAADELLTQPGVWVNVFEKLPTPYGLVRAGLAPDHQNTKKVTELFDRVAEHRRFRFFLNVEIGRHLSHDELLAHHHAVLYAVGAPDDRRLNIDGMGIPGTGTATELVAWINAHPDFAYLPVDLSHERVVVIGNGNVALDVARLLTADPDNLARTDISEFALHVLGGSAVREVVVAARRGPAHSAFTLPELIGLKATSEVVLDAGDRKLVEGDFATVSDSLTRKKLEVLSSLVDSSKPTSRRRIRLAYQLTPKRVLGNQRATGVEFSVTGTEESRRFDAGLVLTSVGYRGKRIRDLPFDEEAAVIPNDGGRVVDPSRGRPMPGAYVAGWIKRGPTGFIGTNKLCSVQTVQAVVADFNAGWLTDPVAEPAELAKLVHARQPDTVDSVGWRAIDAAEIAQGSTEGRPRRKFTDVADMLAVAAGAPPLRLRALS</sequence>
<gene>
    <name type="primary">fprB</name>
    <name type="ordered locus">ML2134</name>
    <name type="ORF">MLCB57.39</name>
</gene>
<organism>
    <name type="scientific">Mycobacterium leprae (strain TN)</name>
    <dbReference type="NCBI Taxonomy" id="272631"/>
    <lineage>
        <taxon>Bacteria</taxon>
        <taxon>Bacillati</taxon>
        <taxon>Actinomycetota</taxon>
        <taxon>Actinomycetes</taxon>
        <taxon>Mycobacteriales</taxon>
        <taxon>Mycobacteriaceae</taxon>
        <taxon>Mycobacterium</taxon>
    </lineage>
</organism>
<proteinExistence type="inferred from homology"/>
<feature type="chain" id="PRO_0000167674" description="Probable ferredoxin/ferredoxin--NADP reductase">
    <location>
        <begin position="1"/>
        <end position="555"/>
    </location>
</feature>
<feature type="domain" description="4Fe-4S ferredoxin-type 1" evidence="2">
    <location>
        <begin position="2"/>
        <end position="29"/>
    </location>
</feature>
<feature type="domain" description="4Fe-4S ferredoxin-type 2" evidence="2">
    <location>
        <begin position="37"/>
        <end position="66"/>
    </location>
</feature>
<feature type="region of interest" description="Ferredoxin--NADP reductase">
    <location>
        <begin position="115"/>
        <end position="555"/>
    </location>
</feature>
<feature type="binding site" evidence="1">
    <location>
        <position position="9"/>
    </location>
    <ligand>
        <name>[4Fe-4S] cluster</name>
        <dbReference type="ChEBI" id="CHEBI:49883"/>
        <label>1</label>
    </ligand>
</feature>
<feature type="binding site" evidence="1">
    <location>
        <position position="15"/>
    </location>
    <ligand>
        <name>[4Fe-4S] cluster</name>
        <dbReference type="ChEBI" id="CHEBI:49883"/>
        <label>1</label>
    </ligand>
</feature>
<feature type="binding site" evidence="1">
    <location>
        <position position="19"/>
    </location>
    <ligand>
        <name>[4Fe-4S] cluster</name>
        <dbReference type="ChEBI" id="CHEBI:49883"/>
        <label>1</label>
    </ligand>
</feature>
<feature type="binding site" evidence="2">
    <location>
        <position position="46"/>
    </location>
    <ligand>
        <name>[4Fe-4S] cluster</name>
        <dbReference type="ChEBI" id="CHEBI:49883"/>
        <label>2</label>
    </ligand>
</feature>
<feature type="binding site" evidence="2">
    <location>
        <position position="49"/>
    </location>
    <ligand>
        <name>[4Fe-4S] cluster</name>
        <dbReference type="ChEBI" id="CHEBI:49883"/>
        <label>2</label>
    </ligand>
</feature>
<feature type="binding site" evidence="2">
    <location>
        <position position="52"/>
    </location>
    <ligand>
        <name>[4Fe-4S] cluster</name>
        <dbReference type="ChEBI" id="CHEBI:49883"/>
        <label>2</label>
    </ligand>
</feature>
<feature type="binding site" evidence="2">
    <location>
        <position position="56"/>
    </location>
    <ligand>
        <name>[4Fe-4S] cluster</name>
        <dbReference type="ChEBI" id="CHEBI:49883"/>
        <label>2</label>
    </ligand>
</feature>
<feature type="binding site" evidence="1">
    <location>
        <position position="123"/>
    </location>
    <ligand>
        <name>FAD</name>
        <dbReference type="ChEBI" id="CHEBI:57692"/>
    </ligand>
</feature>
<feature type="binding site" evidence="1">
    <location>
        <position position="143"/>
    </location>
    <ligand>
        <name>FAD</name>
        <dbReference type="ChEBI" id="CHEBI:57692"/>
    </ligand>
</feature>
<feature type="binding site" evidence="1">
    <location>
        <position position="151"/>
    </location>
    <ligand>
        <name>FAD</name>
        <dbReference type="ChEBI" id="CHEBI:57692"/>
    </ligand>
</feature>
<feature type="binding site" evidence="1">
    <location>
        <position position="187"/>
    </location>
    <ligand>
        <name>FAD</name>
        <dbReference type="ChEBI" id="CHEBI:57692"/>
    </ligand>
</feature>
<feature type="binding site" evidence="1">
    <location>
        <position position="213"/>
    </location>
    <ligand>
        <name>NADP(+)</name>
        <dbReference type="ChEBI" id="CHEBI:58349"/>
    </ligand>
</feature>
<feature type="binding site" evidence="1">
    <location>
        <begin position="258"/>
        <end position="261"/>
    </location>
    <ligand>
        <name>NADP(+)</name>
        <dbReference type="ChEBI" id="CHEBI:58349"/>
    </ligand>
</feature>
<feature type="binding site" evidence="1">
    <location>
        <begin position="302"/>
        <end position="303"/>
    </location>
    <ligand>
        <name>NADP(+)</name>
        <dbReference type="ChEBI" id="CHEBI:58349"/>
    </ligand>
</feature>
<feature type="binding site" evidence="1">
    <location>
        <position position="314"/>
    </location>
    <ligand>
        <name>NADP(+)</name>
        <dbReference type="ChEBI" id="CHEBI:58349"/>
    </ligand>
</feature>
<feature type="binding site" evidence="1">
    <location>
        <position position="453"/>
    </location>
    <ligand>
        <name>FAD</name>
        <dbReference type="ChEBI" id="CHEBI:57692"/>
    </ligand>
</feature>
<feature type="binding site" evidence="1">
    <location>
        <begin position="460"/>
        <end position="462"/>
    </location>
    <ligand>
        <name>FAD</name>
        <dbReference type="ChEBI" id="CHEBI:57692"/>
    </ligand>
</feature>
<feature type="binding site" evidence="1">
    <location>
        <position position="460"/>
    </location>
    <ligand>
        <name>NADP(+)</name>
        <dbReference type="ChEBI" id="CHEBI:58349"/>
    </ligand>
</feature>
<reference key="1">
    <citation type="journal article" date="2001" name="Nature">
        <title>Massive gene decay in the leprosy bacillus.</title>
        <authorList>
            <person name="Cole S.T."/>
            <person name="Eiglmeier K."/>
            <person name="Parkhill J."/>
            <person name="James K.D."/>
            <person name="Thomson N.R."/>
            <person name="Wheeler P.R."/>
            <person name="Honore N."/>
            <person name="Garnier T."/>
            <person name="Churcher C.M."/>
            <person name="Harris D.E."/>
            <person name="Mungall K.L."/>
            <person name="Basham D."/>
            <person name="Brown D."/>
            <person name="Chillingworth T."/>
            <person name="Connor R."/>
            <person name="Davies R.M."/>
            <person name="Devlin K."/>
            <person name="Duthoy S."/>
            <person name="Feltwell T."/>
            <person name="Fraser A."/>
            <person name="Hamlin N."/>
            <person name="Holroyd S."/>
            <person name="Hornsby T."/>
            <person name="Jagels K."/>
            <person name="Lacroix C."/>
            <person name="Maclean J."/>
            <person name="Moule S."/>
            <person name="Murphy L.D."/>
            <person name="Oliver K."/>
            <person name="Quail M.A."/>
            <person name="Rajandream M.A."/>
            <person name="Rutherford K.M."/>
            <person name="Rutter S."/>
            <person name="Seeger K."/>
            <person name="Simon S."/>
            <person name="Simmonds M."/>
            <person name="Skelton J."/>
            <person name="Squares R."/>
            <person name="Squares S."/>
            <person name="Stevens K."/>
            <person name="Taylor K."/>
            <person name="Whitehead S."/>
            <person name="Woodward J.R."/>
            <person name="Barrell B.G."/>
        </authorList>
    </citation>
    <scope>NUCLEOTIDE SEQUENCE [LARGE SCALE GENOMIC DNA]</scope>
    <source>
        <strain>TN</strain>
    </source>
</reference>
<name>FPRB_MYCLE</name>
<comment type="catalytic activity">
    <reaction>
        <text>2 reduced [2Fe-2S]-[ferredoxin] + NADP(+) + H(+) = 2 oxidized [2Fe-2S]-[ferredoxin] + NADPH</text>
        <dbReference type="Rhea" id="RHEA:20125"/>
        <dbReference type="Rhea" id="RHEA-COMP:10000"/>
        <dbReference type="Rhea" id="RHEA-COMP:10001"/>
        <dbReference type="ChEBI" id="CHEBI:15378"/>
        <dbReference type="ChEBI" id="CHEBI:33737"/>
        <dbReference type="ChEBI" id="CHEBI:33738"/>
        <dbReference type="ChEBI" id="CHEBI:57783"/>
        <dbReference type="ChEBI" id="CHEBI:58349"/>
        <dbReference type="EC" id="1.18.1.2"/>
    </reaction>
</comment>
<comment type="cofactor">
    <cofactor>
        <name>[4Fe-4S] cluster</name>
        <dbReference type="ChEBI" id="CHEBI:49883"/>
    </cofactor>
    <text>Binds 1 or 2 [4Fe-4S] clusters.</text>
</comment>
<comment type="cofactor">
    <cofactor>
        <name>FAD</name>
        <dbReference type="ChEBI" id="CHEBI:57692"/>
    </cofactor>
</comment>
<comment type="similarity">
    <text evidence="3">In the C-terminal section; belongs to the ferredoxin--NADP reductase family.</text>
</comment>
<protein>
    <recommendedName>
        <fullName>Probable ferredoxin/ferredoxin--NADP reductase</fullName>
        <shortName>FNR</shortName>
        <ecNumber>1.18.1.2</ecNumber>
    </recommendedName>
</protein>
<keyword id="KW-0004">4Fe-4S</keyword>
<keyword id="KW-0249">Electron transport</keyword>
<keyword id="KW-0274">FAD</keyword>
<keyword id="KW-0285">Flavoprotein</keyword>
<keyword id="KW-0408">Iron</keyword>
<keyword id="KW-0411">Iron-sulfur</keyword>
<keyword id="KW-0479">Metal-binding</keyword>
<keyword id="KW-0521">NADP</keyword>
<keyword id="KW-0560">Oxidoreductase</keyword>
<keyword id="KW-1185">Reference proteome</keyword>
<keyword id="KW-0677">Repeat</keyword>
<keyword id="KW-0813">Transport</keyword>
<evidence type="ECO:0000250" key="1"/>
<evidence type="ECO:0000255" key="2">
    <source>
        <dbReference type="PROSITE-ProRule" id="PRU00711"/>
    </source>
</evidence>
<evidence type="ECO:0000305" key="3"/>
<dbReference type="EC" id="1.18.1.2"/>
<dbReference type="EMBL" id="Z99494">
    <property type="protein sequence ID" value="CAB16679.1"/>
    <property type="molecule type" value="Genomic_DNA"/>
</dbReference>
<dbReference type="EMBL" id="AL583924">
    <property type="protein sequence ID" value="CAC31089.1"/>
    <property type="molecule type" value="Genomic_DNA"/>
</dbReference>
<dbReference type="PIR" id="T45351">
    <property type="entry name" value="T45351"/>
</dbReference>
<dbReference type="RefSeq" id="NP_302407.1">
    <property type="nucleotide sequence ID" value="NC_002677.1"/>
</dbReference>
<dbReference type="RefSeq" id="WP_010908727.1">
    <property type="nucleotide sequence ID" value="NC_002677.1"/>
</dbReference>
<dbReference type="SMR" id="O33064"/>
<dbReference type="STRING" id="272631.gene:17575987"/>
<dbReference type="KEGG" id="mle:ML2134"/>
<dbReference type="PATRIC" id="fig|272631.5.peg.4036"/>
<dbReference type="Leproma" id="ML2134"/>
<dbReference type="eggNOG" id="COG0493">
    <property type="taxonomic scope" value="Bacteria"/>
</dbReference>
<dbReference type="eggNOG" id="COG1145">
    <property type="taxonomic scope" value="Bacteria"/>
</dbReference>
<dbReference type="HOGENOM" id="CLU_024722_4_1_11"/>
<dbReference type="OrthoDB" id="289202at2"/>
<dbReference type="Proteomes" id="UP000000806">
    <property type="component" value="Chromosome"/>
</dbReference>
<dbReference type="GO" id="GO:0051539">
    <property type="term" value="F:4 iron, 4 sulfur cluster binding"/>
    <property type="evidence" value="ECO:0007669"/>
    <property type="project" value="UniProtKB-KW"/>
</dbReference>
<dbReference type="GO" id="GO:0004324">
    <property type="term" value="F:ferredoxin-NADP+ reductase activity"/>
    <property type="evidence" value="ECO:0007669"/>
    <property type="project" value="UniProtKB-EC"/>
</dbReference>
<dbReference type="GO" id="GO:0046872">
    <property type="term" value="F:metal ion binding"/>
    <property type="evidence" value="ECO:0007669"/>
    <property type="project" value="UniProtKB-KW"/>
</dbReference>
<dbReference type="Gene3D" id="3.30.70.20">
    <property type="match status" value="1"/>
</dbReference>
<dbReference type="Gene3D" id="3.50.50.60">
    <property type="entry name" value="FAD/NAD(P)-binding domain"/>
    <property type="match status" value="1"/>
</dbReference>
<dbReference type="Gene3D" id="3.40.50.720">
    <property type="entry name" value="NAD(P)-binding Rossmann-like Domain"/>
    <property type="match status" value="1"/>
</dbReference>
<dbReference type="InterPro" id="IPR017896">
    <property type="entry name" value="4Fe4S_Fe-S-bd"/>
</dbReference>
<dbReference type="InterPro" id="IPR017900">
    <property type="entry name" value="4Fe4S_Fe_S_CS"/>
</dbReference>
<dbReference type="InterPro" id="IPR036188">
    <property type="entry name" value="FAD/NAD-bd_sf"/>
</dbReference>
<dbReference type="InterPro" id="IPR023753">
    <property type="entry name" value="FAD/NAD-binding_dom"/>
</dbReference>
<dbReference type="InterPro" id="IPR055275">
    <property type="entry name" value="Ferredox_Rdtase"/>
</dbReference>
<dbReference type="PANTHER" id="PTHR48467">
    <property type="entry name" value="GLUTAMATE SYNTHASE 1 [NADH], CHLOROPLASTIC-LIKE"/>
    <property type="match status" value="1"/>
</dbReference>
<dbReference type="PANTHER" id="PTHR48467:SF1">
    <property type="entry name" value="GLUTAMATE SYNTHASE 1 [NADH], CHLOROPLASTIC-LIKE"/>
    <property type="match status" value="1"/>
</dbReference>
<dbReference type="Pfam" id="PF00037">
    <property type="entry name" value="Fer4"/>
    <property type="match status" value="1"/>
</dbReference>
<dbReference type="Pfam" id="PF07992">
    <property type="entry name" value="Pyr_redox_2"/>
    <property type="match status" value="1"/>
</dbReference>
<dbReference type="PRINTS" id="PR00419">
    <property type="entry name" value="ADXRDTASE"/>
</dbReference>
<dbReference type="SUPFAM" id="SSF54862">
    <property type="entry name" value="4Fe-4S ferredoxins"/>
    <property type="match status" value="1"/>
</dbReference>
<dbReference type="SUPFAM" id="SSF51971">
    <property type="entry name" value="Nucleotide-binding domain"/>
    <property type="match status" value="1"/>
</dbReference>
<dbReference type="PROSITE" id="PS00198">
    <property type="entry name" value="4FE4S_FER_1"/>
    <property type="match status" value="1"/>
</dbReference>
<dbReference type="PROSITE" id="PS51379">
    <property type="entry name" value="4FE4S_FER_2"/>
    <property type="match status" value="2"/>
</dbReference>
<accession>O33064</accession>